<proteinExistence type="inferred from homology"/>
<accession>Q97I48</accession>
<sequence length="289" mass="32560">MDGILNIFKPIGLTSFDVVRQVKKISKEKKVGHTGTLDPLASGVLPICIGKATKIVDFVMEGKKIYDAEMKLGEISDTYDREGKILKVNQVTSSENNIVEAIMSFQGEILQVPPMYSALKVNGIKLYDLARQGIEIERASRKIHIYAIKILSIDIPFVKFRVECSKGTYIRSLCYDIGNKLGCGALMYNLTRVSSGNFNSSFSIPLEDLNEQNITENIINVDKCLENYDEIAVDEKFEKLLVNGVKVSDRRLIEKIPDNKTYRVYNMERKFLGLGNLSEEGFKIIKLLT</sequence>
<dbReference type="EC" id="5.4.99.25" evidence="1"/>
<dbReference type="EMBL" id="AE001437">
    <property type="protein sequence ID" value="AAK79770.1"/>
    <property type="molecule type" value="Genomic_DNA"/>
</dbReference>
<dbReference type="PIR" id="G97122">
    <property type="entry name" value="G97122"/>
</dbReference>
<dbReference type="RefSeq" id="NP_348430.1">
    <property type="nucleotide sequence ID" value="NC_003030.1"/>
</dbReference>
<dbReference type="RefSeq" id="WP_010965111.1">
    <property type="nucleotide sequence ID" value="NC_003030.1"/>
</dbReference>
<dbReference type="SMR" id="Q97I48"/>
<dbReference type="STRING" id="272562.CA_C1805"/>
<dbReference type="GeneID" id="44998299"/>
<dbReference type="KEGG" id="cac:CA_C1805"/>
<dbReference type="PATRIC" id="fig|272562.8.peg.2011"/>
<dbReference type="eggNOG" id="COG0130">
    <property type="taxonomic scope" value="Bacteria"/>
</dbReference>
<dbReference type="HOGENOM" id="CLU_032087_0_1_9"/>
<dbReference type="OrthoDB" id="9802309at2"/>
<dbReference type="Proteomes" id="UP000000814">
    <property type="component" value="Chromosome"/>
</dbReference>
<dbReference type="GO" id="GO:0003723">
    <property type="term" value="F:RNA binding"/>
    <property type="evidence" value="ECO:0007669"/>
    <property type="project" value="InterPro"/>
</dbReference>
<dbReference type="GO" id="GO:0160148">
    <property type="term" value="F:tRNA pseudouridine(55) synthase activity"/>
    <property type="evidence" value="ECO:0007669"/>
    <property type="project" value="UniProtKB-EC"/>
</dbReference>
<dbReference type="GO" id="GO:1990481">
    <property type="term" value="P:mRNA pseudouridine synthesis"/>
    <property type="evidence" value="ECO:0007669"/>
    <property type="project" value="TreeGrafter"/>
</dbReference>
<dbReference type="GO" id="GO:0031119">
    <property type="term" value="P:tRNA pseudouridine synthesis"/>
    <property type="evidence" value="ECO:0007669"/>
    <property type="project" value="UniProtKB-UniRule"/>
</dbReference>
<dbReference type="CDD" id="cd02573">
    <property type="entry name" value="PseudoU_synth_EcTruB"/>
    <property type="match status" value="1"/>
</dbReference>
<dbReference type="Gene3D" id="3.30.2350.10">
    <property type="entry name" value="Pseudouridine synthase"/>
    <property type="match status" value="1"/>
</dbReference>
<dbReference type="HAMAP" id="MF_01080">
    <property type="entry name" value="TruB_bact"/>
    <property type="match status" value="1"/>
</dbReference>
<dbReference type="InterPro" id="IPR020103">
    <property type="entry name" value="PsdUridine_synth_cat_dom_sf"/>
</dbReference>
<dbReference type="InterPro" id="IPR002501">
    <property type="entry name" value="PsdUridine_synth_N"/>
</dbReference>
<dbReference type="InterPro" id="IPR014780">
    <property type="entry name" value="tRNA_psdUridine_synth_TruB"/>
</dbReference>
<dbReference type="InterPro" id="IPR032819">
    <property type="entry name" value="TruB_C"/>
</dbReference>
<dbReference type="NCBIfam" id="TIGR00431">
    <property type="entry name" value="TruB"/>
    <property type="match status" value="1"/>
</dbReference>
<dbReference type="PANTHER" id="PTHR13767:SF2">
    <property type="entry name" value="PSEUDOURIDYLATE SYNTHASE TRUB1"/>
    <property type="match status" value="1"/>
</dbReference>
<dbReference type="PANTHER" id="PTHR13767">
    <property type="entry name" value="TRNA-PSEUDOURIDINE SYNTHASE"/>
    <property type="match status" value="1"/>
</dbReference>
<dbReference type="Pfam" id="PF16198">
    <property type="entry name" value="TruB_C_2"/>
    <property type="match status" value="1"/>
</dbReference>
<dbReference type="Pfam" id="PF01509">
    <property type="entry name" value="TruB_N"/>
    <property type="match status" value="1"/>
</dbReference>
<dbReference type="SUPFAM" id="SSF55120">
    <property type="entry name" value="Pseudouridine synthase"/>
    <property type="match status" value="1"/>
</dbReference>
<name>TRUB_CLOAB</name>
<protein>
    <recommendedName>
        <fullName evidence="1">tRNA pseudouridine synthase B</fullName>
        <ecNumber evidence="1">5.4.99.25</ecNumber>
    </recommendedName>
    <alternativeName>
        <fullName evidence="1">tRNA pseudouridine(55) synthase</fullName>
        <shortName evidence="1">Psi55 synthase</shortName>
    </alternativeName>
    <alternativeName>
        <fullName evidence="1">tRNA pseudouridylate synthase</fullName>
    </alternativeName>
    <alternativeName>
        <fullName evidence="1">tRNA-uridine isomerase</fullName>
    </alternativeName>
</protein>
<evidence type="ECO:0000255" key="1">
    <source>
        <dbReference type="HAMAP-Rule" id="MF_01080"/>
    </source>
</evidence>
<gene>
    <name evidence="1" type="primary">truB</name>
    <name type="ordered locus">CA_C1805</name>
</gene>
<reference key="1">
    <citation type="journal article" date="2001" name="J. Bacteriol.">
        <title>Genome sequence and comparative analysis of the solvent-producing bacterium Clostridium acetobutylicum.</title>
        <authorList>
            <person name="Noelling J."/>
            <person name="Breton G."/>
            <person name="Omelchenko M.V."/>
            <person name="Makarova K.S."/>
            <person name="Zeng Q."/>
            <person name="Gibson R."/>
            <person name="Lee H.M."/>
            <person name="Dubois J."/>
            <person name="Qiu D."/>
            <person name="Hitti J."/>
            <person name="Wolf Y.I."/>
            <person name="Tatusov R.L."/>
            <person name="Sabathe F."/>
            <person name="Doucette-Stamm L.A."/>
            <person name="Soucaille P."/>
            <person name="Daly M.J."/>
            <person name="Bennett G.N."/>
            <person name="Koonin E.V."/>
            <person name="Smith D.R."/>
        </authorList>
    </citation>
    <scope>NUCLEOTIDE SEQUENCE [LARGE SCALE GENOMIC DNA]</scope>
    <source>
        <strain>ATCC 824 / DSM 792 / JCM 1419 / IAM 19013 / LMG 5710 / NBRC 13948 / NRRL B-527 / VKM B-1787 / 2291 / W</strain>
    </source>
</reference>
<feature type="chain" id="PRO_0000121820" description="tRNA pseudouridine synthase B">
    <location>
        <begin position="1"/>
        <end position="289"/>
    </location>
</feature>
<feature type="active site" description="Nucleophile" evidence="1">
    <location>
        <position position="38"/>
    </location>
</feature>
<comment type="function">
    <text evidence="1">Responsible for synthesis of pseudouridine from uracil-55 in the psi GC loop of transfer RNAs.</text>
</comment>
<comment type="catalytic activity">
    <reaction evidence="1">
        <text>uridine(55) in tRNA = pseudouridine(55) in tRNA</text>
        <dbReference type="Rhea" id="RHEA:42532"/>
        <dbReference type="Rhea" id="RHEA-COMP:10101"/>
        <dbReference type="Rhea" id="RHEA-COMP:10102"/>
        <dbReference type="ChEBI" id="CHEBI:65314"/>
        <dbReference type="ChEBI" id="CHEBI:65315"/>
        <dbReference type="EC" id="5.4.99.25"/>
    </reaction>
</comment>
<comment type="similarity">
    <text evidence="1">Belongs to the pseudouridine synthase TruB family. Type 1 subfamily.</text>
</comment>
<keyword id="KW-0413">Isomerase</keyword>
<keyword id="KW-1185">Reference proteome</keyword>
<keyword id="KW-0819">tRNA processing</keyword>
<organism>
    <name type="scientific">Clostridium acetobutylicum (strain ATCC 824 / DSM 792 / JCM 1419 / IAM 19013 / LMG 5710 / NBRC 13948 / NRRL B-527 / VKM B-1787 / 2291 / W)</name>
    <dbReference type="NCBI Taxonomy" id="272562"/>
    <lineage>
        <taxon>Bacteria</taxon>
        <taxon>Bacillati</taxon>
        <taxon>Bacillota</taxon>
        <taxon>Clostridia</taxon>
        <taxon>Eubacteriales</taxon>
        <taxon>Clostridiaceae</taxon>
        <taxon>Clostridium</taxon>
    </lineage>
</organism>